<proteinExistence type="inferred from homology"/>
<comment type="function">
    <text evidence="1">NDH-1 shuttles electrons from NADH, via FMN and iron-sulfur (Fe-S) centers, to quinones in the respiratory chain. The immediate electron acceptor for the enzyme in this species is believed to be ubiquinone. Couples the redox reaction to proton translocation (for every two electrons transferred, four hydrogen ions are translocated across the cytoplasmic membrane), and thus conserves the redox energy in a proton gradient.</text>
</comment>
<comment type="catalytic activity">
    <reaction evidence="1">
        <text>a quinone + NADH + 5 H(+)(in) = a quinol + NAD(+) + 4 H(+)(out)</text>
        <dbReference type="Rhea" id="RHEA:57888"/>
        <dbReference type="ChEBI" id="CHEBI:15378"/>
        <dbReference type="ChEBI" id="CHEBI:24646"/>
        <dbReference type="ChEBI" id="CHEBI:57540"/>
        <dbReference type="ChEBI" id="CHEBI:57945"/>
        <dbReference type="ChEBI" id="CHEBI:132124"/>
    </reaction>
</comment>
<comment type="cofactor">
    <cofactor evidence="1">
        <name>[4Fe-4S] cluster</name>
        <dbReference type="ChEBI" id="CHEBI:49883"/>
    </cofactor>
    <text evidence="1">Binds 1 [4Fe-4S] cluster.</text>
</comment>
<comment type="subunit">
    <text evidence="1">NDH-1 is composed of 14 different subunits. Subunits NuoB, C, D, E, F, and G constitute the peripheral sector of the complex.</text>
</comment>
<comment type="subcellular location">
    <subcellularLocation>
        <location evidence="1">Cell inner membrane</location>
        <topology evidence="1">Peripheral membrane protein</topology>
        <orientation evidence="1">Cytoplasmic side</orientation>
    </subcellularLocation>
</comment>
<comment type="similarity">
    <text evidence="1">Belongs to the complex I 20 kDa subunit family.</text>
</comment>
<evidence type="ECO:0000255" key="1">
    <source>
        <dbReference type="HAMAP-Rule" id="MF_01356"/>
    </source>
</evidence>
<accession>Q0BK52</accession>
<keyword id="KW-0004">4Fe-4S</keyword>
<keyword id="KW-0997">Cell inner membrane</keyword>
<keyword id="KW-1003">Cell membrane</keyword>
<keyword id="KW-0408">Iron</keyword>
<keyword id="KW-0411">Iron-sulfur</keyword>
<keyword id="KW-0472">Membrane</keyword>
<keyword id="KW-0479">Metal-binding</keyword>
<keyword id="KW-0520">NAD</keyword>
<keyword id="KW-0874">Quinone</keyword>
<keyword id="KW-1278">Translocase</keyword>
<keyword id="KW-0813">Transport</keyword>
<keyword id="KW-0830">Ubiquinone</keyword>
<protein>
    <recommendedName>
        <fullName evidence="1">NADH-quinone oxidoreductase subunit B</fullName>
        <ecNumber evidence="1">7.1.1.-</ecNumber>
    </recommendedName>
    <alternativeName>
        <fullName evidence="1">NADH dehydrogenase I subunit B</fullName>
    </alternativeName>
    <alternativeName>
        <fullName evidence="1">NDH-1 subunit B</fullName>
    </alternativeName>
</protein>
<reference key="1">
    <citation type="journal article" date="2006" name="J. Bacteriol.">
        <title>Chromosome rearrangement and diversification of Francisella tularensis revealed by the type B (OSU18) genome sequence.</title>
        <authorList>
            <person name="Petrosino J.F."/>
            <person name="Xiang Q."/>
            <person name="Karpathy S.E."/>
            <person name="Jiang H."/>
            <person name="Yerrapragada S."/>
            <person name="Liu Y."/>
            <person name="Gioia J."/>
            <person name="Hemphill L."/>
            <person name="Gonzalez A."/>
            <person name="Raghavan T.M."/>
            <person name="Uzman A."/>
            <person name="Fox G.E."/>
            <person name="Highlander S."/>
            <person name="Reichard M."/>
            <person name="Morton R.J."/>
            <person name="Clinkenbeard K.D."/>
            <person name="Weinstock G.M."/>
        </authorList>
    </citation>
    <scope>NUCLEOTIDE SEQUENCE [LARGE SCALE GENOMIC DNA]</scope>
    <source>
        <strain>OSU18</strain>
    </source>
</reference>
<dbReference type="EC" id="7.1.1.-" evidence="1"/>
<dbReference type="EMBL" id="CP000437">
    <property type="protein sequence ID" value="ABI83532.1"/>
    <property type="molecule type" value="Genomic_DNA"/>
</dbReference>
<dbReference type="RefSeq" id="WP_003017394.1">
    <property type="nucleotide sequence ID" value="NC_017463.1"/>
</dbReference>
<dbReference type="SMR" id="Q0BK52"/>
<dbReference type="KEGG" id="fth:FTH_1765"/>
<dbReference type="GO" id="GO:0005886">
    <property type="term" value="C:plasma membrane"/>
    <property type="evidence" value="ECO:0007669"/>
    <property type="project" value="UniProtKB-SubCell"/>
</dbReference>
<dbReference type="GO" id="GO:0045271">
    <property type="term" value="C:respiratory chain complex I"/>
    <property type="evidence" value="ECO:0007669"/>
    <property type="project" value="TreeGrafter"/>
</dbReference>
<dbReference type="GO" id="GO:0051539">
    <property type="term" value="F:4 iron, 4 sulfur cluster binding"/>
    <property type="evidence" value="ECO:0007669"/>
    <property type="project" value="UniProtKB-KW"/>
</dbReference>
<dbReference type="GO" id="GO:0005506">
    <property type="term" value="F:iron ion binding"/>
    <property type="evidence" value="ECO:0007669"/>
    <property type="project" value="UniProtKB-UniRule"/>
</dbReference>
<dbReference type="GO" id="GO:0008137">
    <property type="term" value="F:NADH dehydrogenase (ubiquinone) activity"/>
    <property type="evidence" value="ECO:0007669"/>
    <property type="project" value="InterPro"/>
</dbReference>
<dbReference type="GO" id="GO:0050136">
    <property type="term" value="F:NADH:ubiquinone reductase (non-electrogenic) activity"/>
    <property type="evidence" value="ECO:0007669"/>
    <property type="project" value="UniProtKB-UniRule"/>
</dbReference>
<dbReference type="GO" id="GO:0048038">
    <property type="term" value="F:quinone binding"/>
    <property type="evidence" value="ECO:0007669"/>
    <property type="project" value="UniProtKB-KW"/>
</dbReference>
<dbReference type="GO" id="GO:0009060">
    <property type="term" value="P:aerobic respiration"/>
    <property type="evidence" value="ECO:0007669"/>
    <property type="project" value="TreeGrafter"/>
</dbReference>
<dbReference type="GO" id="GO:0015990">
    <property type="term" value="P:electron transport coupled proton transport"/>
    <property type="evidence" value="ECO:0007669"/>
    <property type="project" value="TreeGrafter"/>
</dbReference>
<dbReference type="FunFam" id="3.40.50.12280:FF:000001">
    <property type="entry name" value="NADH-quinone oxidoreductase subunit B 2"/>
    <property type="match status" value="1"/>
</dbReference>
<dbReference type="Gene3D" id="3.40.50.12280">
    <property type="match status" value="1"/>
</dbReference>
<dbReference type="HAMAP" id="MF_01356">
    <property type="entry name" value="NDH1_NuoB"/>
    <property type="match status" value="1"/>
</dbReference>
<dbReference type="InterPro" id="IPR006137">
    <property type="entry name" value="NADH_UbQ_OxRdtase-like_20kDa"/>
</dbReference>
<dbReference type="InterPro" id="IPR006138">
    <property type="entry name" value="NADH_UQ_OxRdtase_20Kd_su"/>
</dbReference>
<dbReference type="NCBIfam" id="TIGR01957">
    <property type="entry name" value="nuoB_fam"/>
    <property type="match status" value="1"/>
</dbReference>
<dbReference type="NCBIfam" id="NF005012">
    <property type="entry name" value="PRK06411.1"/>
    <property type="match status" value="1"/>
</dbReference>
<dbReference type="PANTHER" id="PTHR11995">
    <property type="entry name" value="NADH DEHYDROGENASE"/>
    <property type="match status" value="1"/>
</dbReference>
<dbReference type="PANTHER" id="PTHR11995:SF14">
    <property type="entry name" value="NADH DEHYDROGENASE [UBIQUINONE] IRON-SULFUR PROTEIN 7, MITOCHONDRIAL"/>
    <property type="match status" value="1"/>
</dbReference>
<dbReference type="Pfam" id="PF01058">
    <property type="entry name" value="Oxidored_q6"/>
    <property type="match status" value="1"/>
</dbReference>
<dbReference type="SUPFAM" id="SSF56770">
    <property type="entry name" value="HydA/Nqo6-like"/>
    <property type="match status" value="1"/>
</dbReference>
<dbReference type="PROSITE" id="PS01150">
    <property type="entry name" value="COMPLEX1_20K"/>
    <property type="match status" value="1"/>
</dbReference>
<sequence>MGIGNENKGFITASADALINWVRTGSLWPVTTGLACCAVEMMHAGAARYDLDRFGIVFRPSPRQSDVLIVAGTLCNKMAPALRQVYDQMPDPKWVISMGSCANGGGYYHYSYSVVRGCDRIVPVDIYVPGCPPTAEALVYGIIQLQNKIIRKDTIARK</sequence>
<feature type="chain" id="PRO_0000376229" description="NADH-quinone oxidoreductase subunit B">
    <location>
        <begin position="1"/>
        <end position="158"/>
    </location>
</feature>
<feature type="binding site" evidence="1">
    <location>
        <position position="36"/>
    </location>
    <ligand>
        <name>[4Fe-4S] cluster</name>
        <dbReference type="ChEBI" id="CHEBI:49883"/>
    </ligand>
</feature>
<feature type="binding site" evidence="1">
    <location>
        <position position="37"/>
    </location>
    <ligand>
        <name>[4Fe-4S] cluster</name>
        <dbReference type="ChEBI" id="CHEBI:49883"/>
    </ligand>
</feature>
<feature type="binding site" evidence="1">
    <location>
        <position position="101"/>
    </location>
    <ligand>
        <name>[4Fe-4S] cluster</name>
        <dbReference type="ChEBI" id="CHEBI:49883"/>
    </ligand>
</feature>
<feature type="binding site" evidence="1">
    <location>
        <position position="131"/>
    </location>
    <ligand>
        <name>[4Fe-4S] cluster</name>
        <dbReference type="ChEBI" id="CHEBI:49883"/>
    </ligand>
</feature>
<organism>
    <name type="scientific">Francisella tularensis subsp. holarctica (strain OSU18)</name>
    <dbReference type="NCBI Taxonomy" id="393011"/>
    <lineage>
        <taxon>Bacteria</taxon>
        <taxon>Pseudomonadati</taxon>
        <taxon>Pseudomonadota</taxon>
        <taxon>Gammaproteobacteria</taxon>
        <taxon>Thiotrichales</taxon>
        <taxon>Francisellaceae</taxon>
        <taxon>Francisella</taxon>
    </lineage>
</organism>
<name>NUOB_FRATO</name>
<gene>
    <name evidence="1" type="primary">nuoB</name>
    <name type="ordered locus">FTH_1765</name>
</gene>